<accession>P0DA90</accession>
<accession>Q8K8J8</accession>
<feature type="chain" id="PRO_0000179058" description="GTPase Der">
    <location>
        <begin position="1"/>
        <end position="436"/>
    </location>
</feature>
<feature type="domain" description="EngA-type G 1">
    <location>
        <begin position="4"/>
        <end position="167"/>
    </location>
</feature>
<feature type="domain" description="EngA-type G 2">
    <location>
        <begin position="175"/>
        <end position="351"/>
    </location>
</feature>
<feature type="domain" description="KH-like" evidence="1">
    <location>
        <begin position="352"/>
        <end position="436"/>
    </location>
</feature>
<feature type="binding site" evidence="1">
    <location>
        <begin position="10"/>
        <end position="17"/>
    </location>
    <ligand>
        <name>GTP</name>
        <dbReference type="ChEBI" id="CHEBI:37565"/>
        <label>1</label>
    </ligand>
</feature>
<feature type="binding site" evidence="1">
    <location>
        <begin position="57"/>
        <end position="61"/>
    </location>
    <ligand>
        <name>GTP</name>
        <dbReference type="ChEBI" id="CHEBI:37565"/>
        <label>1</label>
    </ligand>
</feature>
<feature type="binding site" evidence="1">
    <location>
        <begin position="119"/>
        <end position="122"/>
    </location>
    <ligand>
        <name>GTP</name>
        <dbReference type="ChEBI" id="CHEBI:37565"/>
        <label>1</label>
    </ligand>
</feature>
<feature type="binding site" evidence="1">
    <location>
        <begin position="181"/>
        <end position="188"/>
    </location>
    <ligand>
        <name>GTP</name>
        <dbReference type="ChEBI" id="CHEBI:37565"/>
        <label>2</label>
    </ligand>
</feature>
<feature type="binding site" evidence="1">
    <location>
        <begin position="229"/>
        <end position="233"/>
    </location>
    <ligand>
        <name>GTP</name>
        <dbReference type="ChEBI" id="CHEBI:37565"/>
        <label>2</label>
    </ligand>
</feature>
<feature type="binding site" evidence="1">
    <location>
        <begin position="294"/>
        <end position="297"/>
    </location>
    <ligand>
        <name>GTP</name>
        <dbReference type="ChEBI" id="CHEBI:37565"/>
        <label>2</label>
    </ligand>
</feature>
<proteinExistence type="inferred from homology"/>
<reference key="1">
    <citation type="journal article" date="2002" name="Proc. Natl. Acad. Sci. U.S.A.">
        <title>Genome sequence of a serotype M3 strain of group A Streptococcus: phage-encoded toxins, the high-virulence phenotype, and clone emergence.</title>
        <authorList>
            <person name="Beres S.B."/>
            <person name="Sylva G.L."/>
            <person name="Barbian K.D."/>
            <person name="Lei B."/>
            <person name="Hoff J.S."/>
            <person name="Mammarella N.D."/>
            <person name="Liu M.-Y."/>
            <person name="Smoot J.C."/>
            <person name="Porcella S.F."/>
            <person name="Parkins L.D."/>
            <person name="Campbell D.S."/>
            <person name="Smith T.M."/>
            <person name="McCormick J.K."/>
            <person name="Leung D.Y.M."/>
            <person name="Schlievert P.M."/>
            <person name="Musser J.M."/>
        </authorList>
    </citation>
    <scope>NUCLEOTIDE SEQUENCE [LARGE SCALE GENOMIC DNA]</scope>
    <source>
        <strain>ATCC BAA-595 / MGAS315</strain>
    </source>
</reference>
<dbReference type="EMBL" id="AE014074">
    <property type="protein sequence ID" value="AAM78856.1"/>
    <property type="molecule type" value="Genomic_DNA"/>
</dbReference>
<dbReference type="RefSeq" id="WP_011054203.1">
    <property type="nucleotide sequence ID" value="NC_004070.1"/>
</dbReference>
<dbReference type="SMR" id="P0DA90"/>
<dbReference type="KEGG" id="spg:SpyM3_0249"/>
<dbReference type="HOGENOM" id="CLU_016077_6_2_9"/>
<dbReference type="Proteomes" id="UP000000564">
    <property type="component" value="Chromosome"/>
</dbReference>
<dbReference type="GO" id="GO:0005525">
    <property type="term" value="F:GTP binding"/>
    <property type="evidence" value="ECO:0007669"/>
    <property type="project" value="UniProtKB-UniRule"/>
</dbReference>
<dbReference type="GO" id="GO:0043022">
    <property type="term" value="F:ribosome binding"/>
    <property type="evidence" value="ECO:0007669"/>
    <property type="project" value="TreeGrafter"/>
</dbReference>
<dbReference type="GO" id="GO:0042254">
    <property type="term" value="P:ribosome biogenesis"/>
    <property type="evidence" value="ECO:0007669"/>
    <property type="project" value="UniProtKB-KW"/>
</dbReference>
<dbReference type="CDD" id="cd01894">
    <property type="entry name" value="EngA1"/>
    <property type="match status" value="1"/>
</dbReference>
<dbReference type="CDD" id="cd01895">
    <property type="entry name" value="EngA2"/>
    <property type="match status" value="1"/>
</dbReference>
<dbReference type="FunFam" id="3.30.300.20:FF:000004">
    <property type="entry name" value="GTPase Der"/>
    <property type="match status" value="1"/>
</dbReference>
<dbReference type="FunFam" id="3.40.50.300:FF:000040">
    <property type="entry name" value="GTPase Der"/>
    <property type="match status" value="1"/>
</dbReference>
<dbReference type="FunFam" id="3.40.50.300:FF:000057">
    <property type="entry name" value="GTPase Der"/>
    <property type="match status" value="1"/>
</dbReference>
<dbReference type="Gene3D" id="3.30.300.20">
    <property type="match status" value="1"/>
</dbReference>
<dbReference type="Gene3D" id="3.40.50.300">
    <property type="entry name" value="P-loop containing nucleotide triphosphate hydrolases"/>
    <property type="match status" value="2"/>
</dbReference>
<dbReference type="HAMAP" id="MF_00195">
    <property type="entry name" value="GTPase_Der"/>
    <property type="match status" value="1"/>
</dbReference>
<dbReference type="InterPro" id="IPR031166">
    <property type="entry name" value="G_ENGA"/>
</dbReference>
<dbReference type="InterPro" id="IPR006073">
    <property type="entry name" value="GTP-bd"/>
</dbReference>
<dbReference type="InterPro" id="IPR016484">
    <property type="entry name" value="GTPase_Der"/>
</dbReference>
<dbReference type="InterPro" id="IPR032859">
    <property type="entry name" value="KH_dom-like"/>
</dbReference>
<dbReference type="InterPro" id="IPR015946">
    <property type="entry name" value="KH_dom-like_a/b"/>
</dbReference>
<dbReference type="InterPro" id="IPR027417">
    <property type="entry name" value="P-loop_NTPase"/>
</dbReference>
<dbReference type="InterPro" id="IPR005225">
    <property type="entry name" value="Small_GTP-bd"/>
</dbReference>
<dbReference type="NCBIfam" id="TIGR03594">
    <property type="entry name" value="GTPase_EngA"/>
    <property type="match status" value="1"/>
</dbReference>
<dbReference type="NCBIfam" id="TIGR00231">
    <property type="entry name" value="small_GTP"/>
    <property type="match status" value="2"/>
</dbReference>
<dbReference type="PANTHER" id="PTHR43834">
    <property type="entry name" value="GTPASE DER"/>
    <property type="match status" value="1"/>
</dbReference>
<dbReference type="PANTHER" id="PTHR43834:SF6">
    <property type="entry name" value="GTPASE DER"/>
    <property type="match status" value="1"/>
</dbReference>
<dbReference type="Pfam" id="PF14714">
    <property type="entry name" value="KH_dom-like"/>
    <property type="match status" value="1"/>
</dbReference>
<dbReference type="Pfam" id="PF01926">
    <property type="entry name" value="MMR_HSR1"/>
    <property type="match status" value="2"/>
</dbReference>
<dbReference type="PIRSF" id="PIRSF006485">
    <property type="entry name" value="GTP-binding_EngA"/>
    <property type="match status" value="1"/>
</dbReference>
<dbReference type="PRINTS" id="PR00326">
    <property type="entry name" value="GTP1OBG"/>
</dbReference>
<dbReference type="SUPFAM" id="SSF52540">
    <property type="entry name" value="P-loop containing nucleoside triphosphate hydrolases"/>
    <property type="match status" value="2"/>
</dbReference>
<dbReference type="PROSITE" id="PS51712">
    <property type="entry name" value="G_ENGA"/>
    <property type="match status" value="2"/>
</dbReference>
<keyword id="KW-0342">GTP-binding</keyword>
<keyword id="KW-0547">Nucleotide-binding</keyword>
<keyword id="KW-0677">Repeat</keyword>
<keyword id="KW-0690">Ribosome biogenesis</keyword>
<comment type="function">
    <text evidence="1">GTPase that plays an essential role in the late steps of ribosome biogenesis.</text>
</comment>
<comment type="subunit">
    <text evidence="1">Associates with the 50S ribosomal subunit.</text>
</comment>
<comment type="similarity">
    <text evidence="1">Belongs to the TRAFAC class TrmE-Era-EngA-EngB-Septin-like GTPase superfamily. EngA (Der) GTPase family.</text>
</comment>
<gene>
    <name evidence="1" type="primary">der</name>
    <name type="synonym">engA</name>
    <name type="synonym">pgdA</name>
    <name type="ordered locus">SpyM3_0249</name>
</gene>
<name>DER_STRP3</name>
<protein>
    <recommendedName>
        <fullName evidence="1">GTPase Der</fullName>
    </recommendedName>
    <alternativeName>
        <fullName evidence="1">GTP-binding protein EngA</fullName>
    </alternativeName>
</protein>
<sequence length="436" mass="48772">MVLPTVAIVGRPNVGKSTLFNRIAGERISIVEDVEGVTRDRIYATGEWLNRQFSLIDTGGIDDVDAPFMEQIKHQAQIAMEEADVIVFVVSGKEGVTDADEYVSKILYRTNTPVILAVNKVDNPEMRNDIYDFYSLGLGDPYPVSSVHGIGTGDVLDAIVENLPVEEAEENDDIIRFSLIGRPNVGKSSLINAILGEDRVIASPVAGTTRDAIDTHFTDADGQEFTMIDTAGMRKSGKIYENTEKYSVMRAMRAIDRSDVVLMVINAEEGIREYDKRIAGFAHEAGKGMIIVVNKWDAIDKDNHTVAKWEADIRDQFQFLTYAPIIFVSALTKQRLNKLPDLIKRISESQNKRIPSAVLNDVIMDAIAINPTPTDKGKRLKIFYATQVSVKPPTFVVFVNEEELMHFSYLRFLENQIRAAFTFEGTPIHLIARKRK</sequence>
<evidence type="ECO:0000255" key="1">
    <source>
        <dbReference type="HAMAP-Rule" id="MF_00195"/>
    </source>
</evidence>
<organism>
    <name type="scientific">Streptococcus pyogenes serotype M3 (strain ATCC BAA-595 / MGAS315)</name>
    <dbReference type="NCBI Taxonomy" id="198466"/>
    <lineage>
        <taxon>Bacteria</taxon>
        <taxon>Bacillati</taxon>
        <taxon>Bacillota</taxon>
        <taxon>Bacilli</taxon>
        <taxon>Lactobacillales</taxon>
        <taxon>Streptococcaceae</taxon>
        <taxon>Streptococcus</taxon>
    </lineage>
</organism>